<keyword id="KW-0687">Ribonucleoprotein</keyword>
<keyword id="KW-0689">Ribosomal protein</keyword>
<organism>
    <name type="scientific">Escherichia coli (strain SMS-3-5 / SECEC)</name>
    <dbReference type="NCBI Taxonomy" id="439855"/>
    <lineage>
        <taxon>Bacteria</taxon>
        <taxon>Pseudomonadati</taxon>
        <taxon>Pseudomonadota</taxon>
        <taxon>Gammaproteobacteria</taxon>
        <taxon>Enterobacterales</taxon>
        <taxon>Enterobacteriaceae</taxon>
        <taxon>Escherichia</taxon>
    </lineage>
</organism>
<evidence type="ECO:0000255" key="1">
    <source>
        <dbReference type="HAMAP-Rule" id="MF_00251"/>
    </source>
</evidence>
<evidence type="ECO:0000305" key="2"/>
<feature type="chain" id="PRO_0000344673" description="Large ribosomal subunit protein bL36B">
    <location>
        <begin position="1"/>
        <end position="46"/>
    </location>
</feature>
<dbReference type="EMBL" id="CP000970">
    <property type="protein sequence ID" value="ACB17665.1"/>
    <property type="molecule type" value="Genomic_DNA"/>
</dbReference>
<dbReference type="SMR" id="B1LHW3"/>
<dbReference type="KEGG" id="ecm:EcSMS35_0323"/>
<dbReference type="HOGENOM" id="CLU_135723_3_1_6"/>
<dbReference type="Proteomes" id="UP000007011">
    <property type="component" value="Chromosome"/>
</dbReference>
<dbReference type="GO" id="GO:1990904">
    <property type="term" value="C:ribonucleoprotein complex"/>
    <property type="evidence" value="ECO:0007669"/>
    <property type="project" value="UniProtKB-KW"/>
</dbReference>
<dbReference type="GO" id="GO:0005840">
    <property type="term" value="C:ribosome"/>
    <property type="evidence" value="ECO:0007669"/>
    <property type="project" value="UniProtKB-KW"/>
</dbReference>
<dbReference type="GO" id="GO:0003735">
    <property type="term" value="F:structural constituent of ribosome"/>
    <property type="evidence" value="ECO:0007669"/>
    <property type="project" value="InterPro"/>
</dbReference>
<dbReference type="GO" id="GO:0006412">
    <property type="term" value="P:translation"/>
    <property type="evidence" value="ECO:0007669"/>
    <property type="project" value="UniProtKB-UniRule"/>
</dbReference>
<dbReference type="HAMAP" id="MF_00251">
    <property type="entry name" value="Ribosomal_bL36"/>
    <property type="match status" value="1"/>
</dbReference>
<dbReference type="InterPro" id="IPR000473">
    <property type="entry name" value="Ribosomal_bL36"/>
</dbReference>
<dbReference type="InterPro" id="IPR035977">
    <property type="entry name" value="Ribosomal_bL36_sp"/>
</dbReference>
<dbReference type="InterPro" id="IPR047621">
    <property type="entry name" value="Ribosomal_L36_bact"/>
</dbReference>
<dbReference type="NCBIfam" id="NF002021">
    <property type="entry name" value="PRK00831.1"/>
    <property type="match status" value="1"/>
</dbReference>
<dbReference type="NCBIfam" id="TIGR01022">
    <property type="entry name" value="rpmJ_bact"/>
    <property type="match status" value="1"/>
</dbReference>
<dbReference type="PANTHER" id="PTHR47781">
    <property type="entry name" value="50S RIBOSOMAL PROTEIN L36 2"/>
    <property type="match status" value="1"/>
</dbReference>
<dbReference type="PANTHER" id="PTHR47781:SF1">
    <property type="entry name" value="LARGE RIBOSOMAL SUBUNIT PROTEIN BL36B"/>
    <property type="match status" value="1"/>
</dbReference>
<dbReference type="Pfam" id="PF00444">
    <property type="entry name" value="Ribosomal_L36"/>
    <property type="match status" value="1"/>
</dbReference>
<dbReference type="SUPFAM" id="SSF57840">
    <property type="entry name" value="Ribosomal protein L36"/>
    <property type="match status" value="1"/>
</dbReference>
<dbReference type="PROSITE" id="PS00828">
    <property type="entry name" value="RIBOSOMAL_L36"/>
    <property type="match status" value="1"/>
</dbReference>
<sequence>MKVLNSLRTAKERHPDCQIVKRKGRLYVICKSNPRFKAVQGRKKKR</sequence>
<comment type="similarity">
    <text evidence="1">Belongs to the bacterial ribosomal protein bL36 family.</text>
</comment>
<gene>
    <name evidence="1" type="primary">rpmJ2</name>
    <name type="ordered locus">EcSMS35_0323</name>
</gene>
<reference key="1">
    <citation type="journal article" date="2008" name="J. Bacteriol.">
        <title>Insights into the environmental resistance gene pool from the genome sequence of the multidrug-resistant environmental isolate Escherichia coli SMS-3-5.</title>
        <authorList>
            <person name="Fricke W.F."/>
            <person name="Wright M.S."/>
            <person name="Lindell A.H."/>
            <person name="Harkins D.M."/>
            <person name="Baker-Austin C."/>
            <person name="Ravel J."/>
            <person name="Stepanauskas R."/>
        </authorList>
    </citation>
    <scope>NUCLEOTIDE SEQUENCE [LARGE SCALE GENOMIC DNA]</scope>
    <source>
        <strain>SMS-3-5 / SECEC</strain>
    </source>
</reference>
<accession>B1LHW3</accession>
<proteinExistence type="inferred from homology"/>
<name>RL362_ECOSM</name>
<protein>
    <recommendedName>
        <fullName evidence="1">Large ribosomal subunit protein bL36B</fullName>
    </recommendedName>
    <alternativeName>
        <fullName evidence="2">50S ribosomal protein L36 2</fullName>
    </alternativeName>
</protein>